<organism>
    <name type="scientific">Shewanella loihica (strain ATCC BAA-1088 / PV-4)</name>
    <dbReference type="NCBI Taxonomy" id="323850"/>
    <lineage>
        <taxon>Bacteria</taxon>
        <taxon>Pseudomonadati</taxon>
        <taxon>Pseudomonadota</taxon>
        <taxon>Gammaproteobacteria</taxon>
        <taxon>Alteromonadales</taxon>
        <taxon>Shewanellaceae</taxon>
        <taxon>Shewanella</taxon>
    </lineage>
</organism>
<dbReference type="EMBL" id="CP000606">
    <property type="protein sequence ID" value="ABO23778.1"/>
    <property type="molecule type" value="Genomic_DNA"/>
</dbReference>
<dbReference type="RefSeq" id="WP_011865710.1">
    <property type="nucleotide sequence ID" value="NC_009092.1"/>
</dbReference>
<dbReference type="SMR" id="A3QE80"/>
<dbReference type="STRING" id="323850.Shew_1912"/>
<dbReference type="KEGG" id="slo:Shew_1912"/>
<dbReference type="eggNOG" id="COG0232">
    <property type="taxonomic scope" value="Bacteria"/>
</dbReference>
<dbReference type="HOGENOM" id="CLU_028163_0_0_6"/>
<dbReference type="OrthoDB" id="9803619at2"/>
<dbReference type="Proteomes" id="UP000001558">
    <property type="component" value="Chromosome"/>
</dbReference>
<dbReference type="GO" id="GO:0008832">
    <property type="term" value="F:dGTPase activity"/>
    <property type="evidence" value="ECO:0007669"/>
    <property type="project" value="TreeGrafter"/>
</dbReference>
<dbReference type="GO" id="GO:0006203">
    <property type="term" value="P:dGTP catabolic process"/>
    <property type="evidence" value="ECO:0007669"/>
    <property type="project" value="TreeGrafter"/>
</dbReference>
<dbReference type="CDD" id="cd00077">
    <property type="entry name" value="HDc"/>
    <property type="match status" value="1"/>
</dbReference>
<dbReference type="Gene3D" id="1.10.3210.10">
    <property type="entry name" value="Hypothetical protein af1432"/>
    <property type="match status" value="1"/>
</dbReference>
<dbReference type="HAMAP" id="MF_01212">
    <property type="entry name" value="dGTPase_type2"/>
    <property type="match status" value="1"/>
</dbReference>
<dbReference type="InterPro" id="IPR006261">
    <property type="entry name" value="dGTPase"/>
</dbReference>
<dbReference type="InterPro" id="IPR050135">
    <property type="entry name" value="dGTPase-like"/>
</dbReference>
<dbReference type="InterPro" id="IPR023023">
    <property type="entry name" value="dNTPase_2"/>
</dbReference>
<dbReference type="InterPro" id="IPR003607">
    <property type="entry name" value="HD/PDEase_dom"/>
</dbReference>
<dbReference type="InterPro" id="IPR006674">
    <property type="entry name" value="HD_domain"/>
</dbReference>
<dbReference type="InterPro" id="IPR026875">
    <property type="entry name" value="PHydrolase_assoc_dom"/>
</dbReference>
<dbReference type="NCBIfam" id="NF041026">
    <property type="entry name" value="antiphage_dGTPase"/>
    <property type="match status" value="1"/>
</dbReference>
<dbReference type="NCBIfam" id="TIGR01353">
    <property type="entry name" value="dGTP_triPase"/>
    <property type="match status" value="1"/>
</dbReference>
<dbReference type="NCBIfam" id="NF003701">
    <property type="entry name" value="PRK05318.1"/>
    <property type="match status" value="1"/>
</dbReference>
<dbReference type="PANTHER" id="PTHR11373:SF40">
    <property type="entry name" value="DEOXYGUANOSINETRIPHOSPHATE TRIPHOSPHOHYDROLASE-LIKE PROTEIN 2"/>
    <property type="match status" value="1"/>
</dbReference>
<dbReference type="PANTHER" id="PTHR11373">
    <property type="entry name" value="DEOXYNUCLEOSIDE TRIPHOSPHATE TRIPHOSPHOHYDROLASE"/>
    <property type="match status" value="1"/>
</dbReference>
<dbReference type="Pfam" id="PF01966">
    <property type="entry name" value="HD"/>
    <property type="match status" value="1"/>
</dbReference>
<dbReference type="Pfam" id="PF13286">
    <property type="entry name" value="HD_assoc"/>
    <property type="match status" value="1"/>
</dbReference>
<dbReference type="SMART" id="SM00471">
    <property type="entry name" value="HDc"/>
    <property type="match status" value="1"/>
</dbReference>
<dbReference type="SUPFAM" id="SSF109604">
    <property type="entry name" value="HD-domain/PDEase-like"/>
    <property type="match status" value="1"/>
</dbReference>
<dbReference type="PROSITE" id="PS51831">
    <property type="entry name" value="HD"/>
    <property type="match status" value="1"/>
</dbReference>
<protein>
    <recommendedName>
        <fullName evidence="1">Deoxyguanosinetriphosphate triphosphohydrolase-like protein</fullName>
    </recommendedName>
</protein>
<evidence type="ECO:0000255" key="1">
    <source>
        <dbReference type="HAMAP-Rule" id="MF_01212"/>
    </source>
</evidence>
<evidence type="ECO:0000255" key="2">
    <source>
        <dbReference type="PROSITE-ProRule" id="PRU01175"/>
    </source>
</evidence>
<feature type="chain" id="PRO_1000138929" description="Deoxyguanosinetriphosphate triphosphohydrolase-like protein">
    <location>
        <begin position="1"/>
        <end position="441"/>
    </location>
</feature>
<feature type="domain" description="HD" evidence="2">
    <location>
        <begin position="59"/>
        <end position="250"/>
    </location>
</feature>
<accession>A3QE80</accession>
<reference key="1">
    <citation type="submission" date="2007-03" db="EMBL/GenBank/DDBJ databases">
        <title>Complete sequence of Shewanella loihica PV-4.</title>
        <authorList>
            <consortium name="US DOE Joint Genome Institute"/>
            <person name="Copeland A."/>
            <person name="Lucas S."/>
            <person name="Lapidus A."/>
            <person name="Barry K."/>
            <person name="Detter J.C."/>
            <person name="Glavina del Rio T."/>
            <person name="Hammon N."/>
            <person name="Israni S."/>
            <person name="Dalin E."/>
            <person name="Tice H."/>
            <person name="Pitluck S."/>
            <person name="Chain P."/>
            <person name="Malfatti S."/>
            <person name="Shin M."/>
            <person name="Vergez L."/>
            <person name="Schmutz J."/>
            <person name="Larimer F."/>
            <person name="Land M."/>
            <person name="Hauser L."/>
            <person name="Kyrpides N."/>
            <person name="Mikhailova N."/>
            <person name="Romine M.F."/>
            <person name="Serres G."/>
            <person name="Fredrickson J."/>
            <person name="Tiedje J."/>
            <person name="Richardson P."/>
        </authorList>
    </citation>
    <scope>NUCLEOTIDE SEQUENCE [LARGE SCALE GENOMIC DNA]</scope>
    <source>
        <strain>ATCC BAA-1088 / PV-4</strain>
    </source>
</reference>
<proteinExistence type="inferred from homology"/>
<name>DGTL1_SHELP</name>
<keyword id="KW-0378">Hydrolase</keyword>
<keyword id="KW-1185">Reference proteome</keyword>
<comment type="similarity">
    <text evidence="1">Belongs to the dGTPase family. Type 2 subfamily.</text>
</comment>
<gene>
    <name type="ordered locus">Shew_1912</name>
</gene>
<sequence length="441" mass="50732">MTSAIWHERRLGEEKLRRNDHRSPYQRDRARILHSAAFRRLQAKTQVLGVGMNDFYRTRLTHSLEVSQIGTGICAQLKQKYPDLHHLLDSMSLIESLCLAHDIGHPPFGHGGEVALNYMMRSDGGFEGNGQTFRILTALEPYTQHFGMNLTRRTLLGILKYPASHNELYQSQPRPEVDSYRQLKPSQWRPVKGIFFEDKPVLDWVLEPLSTQDRERFVSAEPGERDQHRRTRYKSLDCSIMELADDTAYAIHDLEDAIVMGIVTQAMWQQDVSSLLAGSDDEWIAKEFATIGDKLFALENHLRKDAIGTLVNGFVTAILIDENPNFIEPLLRYNARLEPPFAEALHVLKQFVYKRVIRKPEIQMLEYKGQQIVMELFEAFASDPERLLPLNTQERWQQMAQQEGNCNRVIADYISGMTDEFAARLHQHLFSAKAGSLIDLQ</sequence>